<keyword id="KW-0903">Direct protein sequencing</keyword>
<keyword id="KW-0325">Glycoprotein</keyword>
<keyword id="KW-0964">Secreted</keyword>
<keyword id="KW-0732">Signal</keyword>
<accession>P86726</accession>
<evidence type="ECO:0000255" key="1"/>
<evidence type="ECO:0000269" key="2">
    <source>
    </source>
</evidence>
<evidence type="ECO:0000269" key="3">
    <source>
    </source>
</evidence>
<evidence type="ECO:0000305" key="4"/>
<reference evidence="4" key="1">
    <citation type="journal article" date="2006" name="BMC Biol.">
        <title>A rapidly evolving secretome builds and patterns a sea shell.</title>
        <authorList>
            <person name="Jackson D.J."/>
            <person name="McDougall C."/>
            <person name="Green K."/>
            <person name="Simpson F."/>
            <person name="Woerheide G."/>
            <person name="Degnan B.M."/>
        </authorList>
    </citation>
    <scope>NUCLEOTIDE SEQUENCE [MRNA]</scope>
    <source>
        <tissue evidence="2">Mantle</tissue>
    </source>
</reference>
<reference evidence="4" key="2">
    <citation type="journal article" date="2010" name="Proteome Sci.">
        <title>Proteomic analysis of the organic matrix of the abalone Haliotis asinina calcified shell.</title>
        <authorList>
            <person name="Marie B."/>
            <person name="Marie A."/>
            <person name="Jackson D.J."/>
            <person name="Dubost L."/>
            <person name="Degnan B.M."/>
            <person name="Milet C."/>
            <person name="Marin F."/>
        </authorList>
    </citation>
    <scope>PROTEIN SEQUENCE OF 26-32; 34-41 AND 93-104</scope>
    <scope>SUBCELLULAR LOCATION</scope>
    <scope>TISSUE SPECIFICITY</scope>
    <source>
        <tissue evidence="3">Shell</tissue>
    </source>
</reference>
<protein>
    <recommendedName>
        <fullName>Uncharacterized protein 7</fullName>
    </recommendedName>
</protein>
<name>UP7_HALAI</name>
<proteinExistence type="evidence at protein level"/>
<sequence>MKYLVGCLCLAAICLSAGAQRKKVKCNLYMLKRSLVHYISRDRTGTRVMPCPPGTIFSEGHCGCVSLTNGCDMRPYSGRKYKHWIHGKWRTRYCPAGTTLNQSKCVCDHA</sequence>
<dbReference type="EMBL" id="DW986339">
    <property type="status" value="NOT_ANNOTATED_CDS"/>
    <property type="molecule type" value="mRNA"/>
</dbReference>
<dbReference type="RefSeq" id="XP_067649668.1">
    <property type="nucleotide sequence ID" value="XM_067793567.1"/>
</dbReference>
<dbReference type="GeneID" id="137255958"/>
<dbReference type="GO" id="GO:0005576">
    <property type="term" value="C:extracellular region"/>
    <property type="evidence" value="ECO:0000314"/>
    <property type="project" value="UniProtKB"/>
</dbReference>
<organism>
    <name type="scientific">Haliotis asinina</name>
    <name type="common">Donkey's ear abalone</name>
    <name type="synonym">Ass's ear abalone</name>
    <dbReference type="NCBI Taxonomy" id="109174"/>
    <lineage>
        <taxon>Eukaryota</taxon>
        <taxon>Metazoa</taxon>
        <taxon>Spiralia</taxon>
        <taxon>Lophotrochozoa</taxon>
        <taxon>Mollusca</taxon>
        <taxon>Gastropoda</taxon>
        <taxon>Vetigastropoda</taxon>
        <taxon>Lepetellida</taxon>
        <taxon>Haliotoidea</taxon>
        <taxon>Haliotidae</taxon>
        <taxon>Haliotis</taxon>
    </lineage>
</organism>
<feature type="signal peptide" evidence="1">
    <location>
        <begin position="1"/>
        <end position="19"/>
    </location>
</feature>
<feature type="chain" id="PRO_0000399453" description="Uncharacterized protein 7" evidence="1">
    <location>
        <begin position="20"/>
        <end position="110"/>
    </location>
</feature>
<feature type="glycosylation site" description="N-linked (GlcNAc...) asparagine" evidence="1">
    <location>
        <position position="101"/>
    </location>
</feature>
<comment type="subcellular location">
    <subcellularLocation>
        <location evidence="3">Secreted</location>
    </subcellularLocation>
</comment>
<comment type="tissue specificity">
    <text evidence="3">Component of the acid-soluble and acid-insoluble organic matrix of prismatic shell layers (at protein level).</text>
</comment>